<proteinExistence type="evidence at protein level"/>
<organism>
    <name type="scientific">Bos taurus</name>
    <name type="common">Bovine</name>
    <dbReference type="NCBI Taxonomy" id="9913"/>
    <lineage>
        <taxon>Eukaryota</taxon>
        <taxon>Metazoa</taxon>
        <taxon>Chordata</taxon>
        <taxon>Craniata</taxon>
        <taxon>Vertebrata</taxon>
        <taxon>Euteleostomi</taxon>
        <taxon>Mammalia</taxon>
        <taxon>Eutheria</taxon>
        <taxon>Laurasiatheria</taxon>
        <taxon>Artiodactyla</taxon>
        <taxon>Ruminantia</taxon>
        <taxon>Pecora</taxon>
        <taxon>Bovidae</taxon>
        <taxon>Bovinae</taxon>
        <taxon>Bos</taxon>
    </lineage>
</organism>
<name>RM04_BOVIN</name>
<keyword id="KW-0002">3D-structure</keyword>
<keyword id="KW-0488">Methylation</keyword>
<keyword id="KW-0496">Mitochondrion</keyword>
<keyword id="KW-1185">Reference proteome</keyword>
<keyword id="KW-0687">Ribonucleoprotein</keyword>
<keyword id="KW-0689">Ribosomal protein</keyword>
<accession>Q32PI6</accession>
<reference key="1">
    <citation type="submission" date="2005-10" db="EMBL/GenBank/DDBJ databases">
        <authorList>
            <consortium name="NIH - Mammalian Gene Collection (MGC) project"/>
        </authorList>
    </citation>
    <scope>NUCLEOTIDE SEQUENCE [LARGE SCALE MRNA]</scope>
    <source>
        <strain>Hereford</strain>
        <tissue>Rumen</tissue>
    </source>
</reference>
<reference key="2">
    <citation type="journal article" date="2001" name="J. Biol. Chem.">
        <title>Structural compensation for the deficit of rRNA with proteins in the mammalian mitochondrial ribosome. Systematic analysis of protein components of the large ribosomal subunit from mammalian mitochondria.</title>
        <authorList>
            <person name="Suzuki T."/>
            <person name="Terasaki M."/>
            <person name="Takemoto-Hori C."/>
            <person name="Hanada T."/>
            <person name="Ueda T."/>
            <person name="Wada A."/>
            <person name="Watanabe K."/>
        </authorList>
    </citation>
    <scope>IDENTIFICATION BY MASS SPECTROMETRY</scope>
    <scope>SUBCELLULAR LOCATION</scope>
    <scope>SUBUNIT</scope>
</reference>
<reference key="3">
    <citation type="journal article" date="2001" name="J. Biol. Chem.">
        <title>The large subunit of the mammalian mitochondrial ribosome. Analysis of the complement of ribosomal proteins present.</title>
        <authorList>
            <person name="Koc E.C."/>
            <person name="Burkhart W."/>
            <person name="Blackburn K."/>
            <person name="Moyer M.B."/>
            <person name="Schlatzer D.M."/>
            <person name="Moseley A."/>
            <person name="Spremulli L.L."/>
        </authorList>
    </citation>
    <scope>IDENTIFICATION BY MASS SPECTROMETRY</scope>
    <scope>SUBCELLULAR LOCATION</scope>
</reference>
<reference key="4">
    <citation type="journal article" date="2006" name="J. Mol. Biol.">
        <title>A structural model for the large subunit of the mammalian mitochondrial ribosome.</title>
        <authorList>
            <person name="Mears J.A."/>
            <person name="Sharma M.R."/>
            <person name="Gutell R.R."/>
            <person name="McCook A.S."/>
            <person name="Richardson P.E."/>
            <person name="Caulfield T.R."/>
            <person name="Agrawal R.K."/>
            <person name="Harvey S.C."/>
        </authorList>
    </citation>
    <scope>STRUCTURE BY ELECTRON MICROSCOPY (12 ANGSTROMS)</scope>
    <scope>SUBCELLULAR LOCATION</scope>
</reference>
<protein>
    <recommendedName>
        <fullName evidence="6">Large ribosomal subunit protein uL4m</fullName>
    </recommendedName>
    <alternativeName>
        <fullName>39S ribosomal protein L4, mitochondrial</fullName>
        <shortName>L4mt</shortName>
        <shortName>MRP-L4</shortName>
    </alternativeName>
</protein>
<feature type="chain" id="PRO_0000238948" description="Large ribosomal subunit protein uL4m">
    <location>
        <begin position="1"/>
        <end position="294"/>
    </location>
</feature>
<feature type="region of interest" description="Disordered" evidence="2">
    <location>
        <begin position="120"/>
        <end position="139"/>
    </location>
</feature>
<feature type="modified residue" description="Omega-N-methylarginine" evidence="1">
    <location>
        <position position="147"/>
    </location>
</feature>
<gene>
    <name type="primary">MRPL4</name>
</gene>
<evidence type="ECO:0000250" key="1">
    <source>
        <dbReference type="UniProtKB" id="Q9BYD3"/>
    </source>
</evidence>
<evidence type="ECO:0000256" key="2">
    <source>
        <dbReference type="SAM" id="MobiDB-lite"/>
    </source>
</evidence>
<evidence type="ECO:0000269" key="3">
    <source>
    </source>
</evidence>
<evidence type="ECO:0000269" key="4">
    <source>
    </source>
</evidence>
<evidence type="ECO:0000269" key="5">
    <source>
    </source>
</evidence>
<evidence type="ECO:0000305" key="6"/>
<sequence length="294" mass="33371">MQQLVRAGARAWLRPRGCRGLSALTEEAVQSAEKPEPLANAGPQAPVLRRCELPVPLHRRPVQAWVESLRGYEQERVGLTELHPDVFSTAPRLDILHQVAIWQKNFKRISYAKTKTRAEVRGGGRKPWQQKGSGRARHGSIRSPIWRGGGVAHGPRGPTSYYYMLPMKVRVQGLKVALTVKLAQDDLHIVDSLELPTTDPQYLMELARYRRWGDSVLFVDLEHEDMPQNVVAATSGLKTFNLIPAIGLNVHSMLKHQTLVLTLPTVAFLEEKLLWHDSRYTPLYPFRLPYRDFP</sequence>
<dbReference type="EMBL" id="BC108102">
    <property type="protein sequence ID" value="AAI08103.1"/>
    <property type="molecule type" value="mRNA"/>
</dbReference>
<dbReference type="RefSeq" id="NP_001032527.1">
    <property type="nucleotide sequence ID" value="NM_001037450.2"/>
</dbReference>
<dbReference type="PDB" id="2FTC">
    <property type="method" value="EM"/>
    <property type="chains" value="D=97-270"/>
</dbReference>
<dbReference type="PDBsum" id="2FTC"/>
<dbReference type="SMR" id="Q32PI6"/>
<dbReference type="FunCoup" id="Q32PI6">
    <property type="interactions" value="2242"/>
</dbReference>
<dbReference type="STRING" id="9913.ENSBTAP00000057411"/>
<dbReference type="PaxDb" id="9913-ENSBTAP00000001861"/>
<dbReference type="Ensembl" id="ENSBTAT00000001861.5">
    <property type="protein sequence ID" value="ENSBTAP00000001861.3"/>
    <property type="gene ID" value="ENSBTAG00000001419.6"/>
</dbReference>
<dbReference type="GeneID" id="507154"/>
<dbReference type="KEGG" id="bta:507154"/>
<dbReference type="CTD" id="51073"/>
<dbReference type="VEuPathDB" id="HostDB:ENSBTAG00000001419"/>
<dbReference type="VGNC" id="VGNC:31635">
    <property type="gene designation" value="MRPL4"/>
</dbReference>
<dbReference type="eggNOG" id="KOG1624">
    <property type="taxonomic scope" value="Eukaryota"/>
</dbReference>
<dbReference type="GeneTree" id="ENSGT00390000014512"/>
<dbReference type="HOGENOM" id="CLU_041575_3_3_1"/>
<dbReference type="InParanoid" id="Q32PI6"/>
<dbReference type="OMA" id="WIENTDA"/>
<dbReference type="OrthoDB" id="275876at2759"/>
<dbReference type="TreeFam" id="TF313913"/>
<dbReference type="Reactome" id="R-BTA-5389840">
    <property type="pathway name" value="Mitochondrial translation elongation"/>
</dbReference>
<dbReference type="Reactome" id="R-BTA-5419276">
    <property type="pathway name" value="Mitochondrial translation termination"/>
</dbReference>
<dbReference type="EvolutionaryTrace" id="Q32PI6"/>
<dbReference type="Proteomes" id="UP000009136">
    <property type="component" value="Chromosome 7"/>
</dbReference>
<dbReference type="Bgee" id="ENSBTAG00000001419">
    <property type="expression patterns" value="Expressed in rectus femoris and 106 other cell types or tissues"/>
</dbReference>
<dbReference type="GO" id="GO:0005743">
    <property type="term" value="C:mitochondrial inner membrane"/>
    <property type="evidence" value="ECO:0000304"/>
    <property type="project" value="Reactome"/>
</dbReference>
<dbReference type="GO" id="GO:0005762">
    <property type="term" value="C:mitochondrial large ribosomal subunit"/>
    <property type="evidence" value="ECO:0000250"/>
    <property type="project" value="UniProtKB"/>
</dbReference>
<dbReference type="GO" id="GO:0003735">
    <property type="term" value="F:structural constituent of ribosome"/>
    <property type="evidence" value="ECO:0000318"/>
    <property type="project" value="GO_Central"/>
</dbReference>
<dbReference type="GO" id="GO:0006412">
    <property type="term" value="P:translation"/>
    <property type="evidence" value="ECO:0007669"/>
    <property type="project" value="InterPro"/>
</dbReference>
<dbReference type="FunFam" id="3.40.1370.10:FF:000005">
    <property type="entry name" value="39S ribosomal protein L4, mitochondrial"/>
    <property type="match status" value="1"/>
</dbReference>
<dbReference type="Gene3D" id="3.40.1370.10">
    <property type="match status" value="1"/>
</dbReference>
<dbReference type="HAMAP" id="MF_01328_B">
    <property type="entry name" value="Ribosomal_uL4_B"/>
    <property type="match status" value="1"/>
</dbReference>
<dbReference type="InterPro" id="IPR002136">
    <property type="entry name" value="Ribosomal_uL4"/>
</dbReference>
<dbReference type="InterPro" id="IPR013005">
    <property type="entry name" value="Ribosomal_uL4-like"/>
</dbReference>
<dbReference type="InterPro" id="IPR023574">
    <property type="entry name" value="Ribosomal_uL4_dom_sf"/>
</dbReference>
<dbReference type="NCBIfam" id="TIGR03953">
    <property type="entry name" value="rplD_bact"/>
    <property type="match status" value="1"/>
</dbReference>
<dbReference type="PANTHER" id="PTHR10746">
    <property type="entry name" value="50S RIBOSOMAL PROTEIN L4"/>
    <property type="match status" value="1"/>
</dbReference>
<dbReference type="PANTHER" id="PTHR10746:SF6">
    <property type="entry name" value="LARGE RIBOSOMAL SUBUNIT PROTEIN UL4M"/>
    <property type="match status" value="1"/>
</dbReference>
<dbReference type="Pfam" id="PF00573">
    <property type="entry name" value="Ribosomal_L4"/>
    <property type="match status" value="1"/>
</dbReference>
<dbReference type="SUPFAM" id="SSF52166">
    <property type="entry name" value="Ribosomal protein L4"/>
    <property type="match status" value="1"/>
</dbReference>
<comment type="subunit">
    <text evidence="1 3">Component of the mitochondrial ribosome large subunit (39S) which comprises a 16S rRNA and about 50 distinct proteins (PubMed:11279069). Interacts with MIEF1 upstream open reading frame protein (By similarity).</text>
</comment>
<comment type="subcellular location">
    <subcellularLocation>
        <location evidence="3 4 5">Mitochondrion</location>
    </subcellularLocation>
</comment>
<comment type="similarity">
    <text evidence="6">Belongs to the universal ribosomal protein uL4 family.</text>
</comment>